<comment type="subcellular location">
    <subcellularLocation>
        <location evidence="1">Cell inner membrane</location>
        <topology evidence="1">Multi-pass membrane protein</topology>
    </subcellularLocation>
</comment>
<comment type="similarity">
    <text evidence="1">Belongs to the major facilitator superfamily. DHA1 family. MdtG (TC 2.A.1.2.20) subfamily.</text>
</comment>
<reference key="1">
    <citation type="submission" date="2009-12" db="EMBL/GenBank/DDBJ databases">
        <title>Complete sequence of Dickeya dadantii Ech586.</title>
        <authorList>
            <consortium name="US DOE Joint Genome Institute"/>
            <person name="Lucas S."/>
            <person name="Copeland A."/>
            <person name="Lapidus A."/>
            <person name="Glavina del Rio T."/>
            <person name="Tice H."/>
            <person name="Bruce D."/>
            <person name="Goodwin L."/>
            <person name="Pitluck S."/>
            <person name="Munk A.C."/>
            <person name="Brettin T."/>
            <person name="Detter J.C."/>
            <person name="Han C."/>
            <person name="Tapia R."/>
            <person name="Larimer F."/>
            <person name="Land M."/>
            <person name="Hauser L."/>
            <person name="Kyrpides N."/>
            <person name="Mikhailova N."/>
            <person name="Balakrishnan V."/>
            <person name="Glasner J."/>
            <person name="Perna N.T."/>
        </authorList>
    </citation>
    <scope>NUCLEOTIDE SEQUENCE [LARGE SCALE GENOMIC DNA]</scope>
    <source>
        <strain>Ech586</strain>
    </source>
</reference>
<organism>
    <name type="scientific">Dickeya zeae (strain Ech586)</name>
    <name type="common">Dickeya dadantii (strain Ech586)</name>
    <dbReference type="NCBI Taxonomy" id="590409"/>
    <lineage>
        <taxon>Bacteria</taxon>
        <taxon>Pseudomonadati</taxon>
        <taxon>Pseudomonadota</taxon>
        <taxon>Gammaproteobacteria</taxon>
        <taxon>Enterobacterales</taxon>
        <taxon>Pectobacteriaceae</taxon>
        <taxon>Dickeya</taxon>
        <taxon>Dickeya parazeae</taxon>
    </lineage>
</organism>
<proteinExistence type="inferred from homology"/>
<protein>
    <recommendedName>
        <fullName evidence="1">Multidrug resistance protein MdtG</fullName>
    </recommendedName>
</protein>
<name>MDTG_DICZ5</name>
<feature type="chain" id="PRO_0000414577" description="Multidrug resistance protein MdtG">
    <location>
        <begin position="1"/>
        <end position="408"/>
    </location>
</feature>
<feature type="transmembrane region" description="Helical" evidence="1">
    <location>
        <begin position="13"/>
        <end position="33"/>
    </location>
</feature>
<feature type="transmembrane region" description="Helical" evidence="1">
    <location>
        <begin position="51"/>
        <end position="71"/>
    </location>
</feature>
<feature type="transmembrane region" description="Helical" evidence="1">
    <location>
        <begin position="89"/>
        <end position="109"/>
    </location>
</feature>
<feature type="transmembrane region" description="Helical" evidence="1">
    <location>
        <begin position="112"/>
        <end position="132"/>
    </location>
</feature>
<feature type="transmembrane region" description="Helical" evidence="1">
    <location>
        <begin position="138"/>
        <end position="158"/>
    </location>
</feature>
<feature type="transmembrane region" description="Helical" evidence="1">
    <location>
        <begin position="170"/>
        <end position="190"/>
    </location>
</feature>
<feature type="transmembrane region" description="Helical" evidence="1">
    <location>
        <begin position="221"/>
        <end position="241"/>
    </location>
</feature>
<feature type="transmembrane region" description="Helical" evidence="1">
    <location>
        <begin position="253"/>
        <end position="273"/>
    </location>
</feature>
<feature type="transmembrane region" description="Helical" evidence="1">
    <location>
        <begin position="287"/>
        <end position="307"/>
    </location>
</feature>
<feature type="transmembrane region" description="Helical" evidence="1">
    <location>
        <begin position="375"/>
        <end position="395"/>
    </location>
</feature>
<accession>D2BX50</accession>
<keyword id="KW-0997">Cell inner membrane</keyword>
<keyword id="KW-1003">Cell membrane</keyword>
<keyword id="KW-0472">Membrane</keyword>
<keyword id="KW-0812">Transmembrane</keyword>
<keyword id="KW-1133">Transmembrane helix</keyword>
<keyword id="KW-0813">Transport</keyword>
<evidence type="ECO:0000255" key="1">
    <source>
        <dbReference type="HAMAP-Rule" id="MF_01528"/>
    </source>
</evidence>
<dbReference type="EMBL" id="CP001836">
    <property type="protein sequence ID" value="ACZ76434.1"/>
    <property type="molecule type" value="Genomic_DNA"/>
</dbReference>
<dbReference type="RefSeq" id="WP_012884263.1">
    <property type="nucleotide sequence ID" value="NC_013592.1"/>
</dbReference>
<dbReference type="SMR" id="D2BX50"/>
<dbReference type="STRING" id="590409.Dd586_1568"/>
<dbReference type="KEGG" id="ddc:Dd586_1568"/>
<dbReference type="eggNOG" id="COG2814">
    <property type="taxonomic scope" value="Bacteria"/>
</dbReference>
<dbReference type="HOGENOM" id="CLU_001265_57_3_6"/>
<dbReference type="OrthoDB" id="65739at2"/>
<dbReference type="Proteomes" id="UP000001446">
    <property type="component" value="Chromosome"/>
</dbReference>
<dbReference type="GO" id="GO:0005886">
    <property type="term" value="C:plasma membrane"/>
    <property type="evidence" value="ECO:0007669"/>
    <property type="project" value="UniProtKB-SubCell"/>
</dbReference>
<dbReference type="GO" id="GO:0022857">
    <property type="term" value="F:transmembrane transporter activity"/>
    <property type="evidence" value="ECO:0007669"/>
    <property type="project" value="UniProtKB-UniRule"/>
</dbReference>
<dbReference type="CDD" id="cd17391">
    <property type="entry name" value="MFS_MdtG_MDR_like"/>
    <property type="match status" value="1"/>
</dbReference>
<dbReference type="FunFam" id="1.20.1250.20:FF:000020">
    <property type="entry name" value="Multidrug resistance protein MdtG"/>
    <property type="match status" value="1"/>
</dbReference>
<dbReference type="FunFam" id="1.20.1250.20:FF:000022">
    <property type="entry name" value="Multidrug resistance protein MdtG"/>
    <property type="match status" value="1"/>
</dbReference>
<dbReference type="Gene3D" id="1.20.1250.20">
    <property type="entry name" value="MFS general substrate transporter like domains"/>
    <property type="match status" value="2"/>
</dbReference>
<dbReference type="HAMAP" id="MF_01528">
    <property type="entry name" value="MFS_MdtG"/>
    <property type="match status" value="1"/>
</dbReference>
<dbReference type="InterPro" id="IPR011701">
    <property type="entry name" value="MFS"/>
</dbReference>
<dbReference type="InterPro" id="IPR020846">
    <property type="entry name" value="MFS_dom"/>
</dbReference>
<dbReference type="InterPro" id="IPR050497">
    <property type="entry name" value="MFS_MdtG_subfamily"/>
</dbReference>
<dbReference type="InterPro" id="IPR036259">
    <property type="entry name" value="MFS_trans_sf"/>
</dbReference>
<dbReference type="InterPro" id="IPR023692">
    <property type="entry name" value="Mutidrug-R_MdtG"/>
</dbReference>
<dbReference type="InterPro" id="IPR001958">
    <property type="entry name" value="Tet-R_TetA/multi-R_MdtG-like"/>
</dbReference>
<dbReference type="NCBIfam" id="NF007372">
    <property type="entry name" value="PRK09874.1"/>
    <property type="match status" value="1"/>
</dbReference>
<dbReference type="PANTHER" id="PTHR43414">
    <property type="entry name" value="MULTIDRUG RESISTANCE PROTEIN MDTG"/>
    <property type="match status" value="1"/>
</dbReference>
<dbReference type="PANTHER" id="PTHR43414:SF6">
    <property type="entry name" value="MULTIDRUG RESISTANCE PROTEIN MDTG"/>
    <property type="match status" value="1"/>
</dbReference>
<dbReference type="Pfam" id="PF07690">
    <property type="entry name" value="MFS_1"/>
    <property type="match status" value="1"/>
</dbReference>
<dbReference type="PRINTS" id="PR01035">
    <property type="entry name" value="TCRTETA"/>
</dbReference>
<dbReference type="SUPFAM" id="SSF103473">
    <property type="entry name" value="MFS general substrate transporter"/>
    <property type="match status" value="1"/>
</dbReference>
<dbReference type="PROSITE" id="PS50850">
    <property type="entry name" value="MFS"/>
    <property type="match status" value="1"/>
</dbReference>
<gene>
    <name evidence="1" type="primary">mdtG</name>
    <name type="ordered locus">Dd586_1568</name>
</gene>
<sequence>MDDTAPIDWKRNLYIAWLGCFFTGAAFSLVMPFLSLYVEQLGIQGHEALNLWSGVVFSITFLFSAIASPFWGRLADRKGRKLMLLRSALGMAIVMALMGLVQNIWQFLLLRAALGVLGGFVPNANALIAIQVPRNRSGWALGTLSTGAVGGALLGPLLGGYLADTFGLRPVFFITAVVLFICFLVTFFFIRERIEPVREKGMLSGRQVMVSLQNPHLVMSLFVTTLIIQVATGSVAPILTLYVRELAGQTDNLAFISGAIAAIPGVSALLSAPRLGKLGDKIGPERILVAMLILSVLLLIPMAFVQSPWQLAVLRFLLGAADGALLPAVQTLLIYHSSHQVAGRIFSYNQSFRDVGNVTGPLLGASVSASFGFRAVFLVTASVVMINAFYSWLSLRRKSNRELVSEAE</sequence>